<keyword id="KW-0325">Glycoprotein</keyword>
<keyword id="KW-1267">Proteomics identification</keyword>
<keyword id="KW-1185">Reference proteome</keyword>
<keyword id="KW-0732">Signal</keyword>
<organism>
    <name type="scientific">Homo sapiens</name>
    <name type="common">Human</name>
    <dbReference type="NCBI Taxonomy" id="9606"/>
    <lineage>
        <taxon>Eukaryota</taxon>
        <taxon>Metazoa</taxon>
        <taxon>Chordata</taxon>
        <taxon>Craniata</taxon>
        <taxon>Vertebrata</taxon>
        <taxon>Euteleostomi</taxon>
        <taxon>Mammalia</taxon>
        <taxon>Eutheria</taxon>
        <taxon>Euarchontoglires</taxon>
        <taxon>Primates</taxon>
        <taxon>Haplorrhini</taxon>
        <taxon>Catarrhini</taxon>
        <taxon>Hominidae</taxon>
        <taxon>Homo</taxon>
    </lineage>
</organism>
<feature type="signal peptide" evidence="1">
    <location>
        <begin position="1"/>
        <end position="20"/>
    </location>
</feature>
<feature type="chain" id="PRO_5008408671" description="MARCO-like protein" evidence="1">
    <location>
        <begin position="21"/>
        <end position="285"/>
    </location>
</feature>
<feature type="region of interest" description="Disordered" evidence="3">
    <location>
        <begin position="47"/>
        <end position="77"/>
    </location>
</feature>
<feature type="region of interest" description="Disordered" evidence="3">
    <location>
        <begin position="91"/>
        <end position="285"/>
    </location>
</feature>
<feature type="compositionally biased region" description="Polar residues" evidence="3">
    <location>
        <begin position="57"/>
        <end position="67"/>
    </location>
</feature>
<feature type="compositionally biased region" description="Polar residues" evidence="3">
    <location>
        <begin position="105"/>
        <end position="114"/>
    </location>
</feature>
<feature type="compositionally biased region" description="Low complexity" evidence="3">
    <location>
        <begin position="115"/>
        <end position="128"/>
    </location>
</feature>
<feature type="compositionally biased region" description="Polar residues" evidence="3">
    <location>
        <begin position="134"/>
        <end position="145"/>
    </location>
</feature>
<feature type="compositionally biased region" description="Low complexity" evidence="3">
    <location>
        <begin position="160"/>
        <end position="173"/>
    </location>
</feature>
<feature type="compositionally biased region" description="Polar residues" evidence="3">
    <location>
        <begin position="174"/>
        <end position="185"/>
    </location>
</feature>
<feature type="compositionally biased region" description="Low complexity" evidence="3">
    <location>
        <begin position="186"/>
        <end position="220"/>
    </location>
</feature>
<feature type="compositionally biased region" description="Polar residues" evidence="3">
    <location>
        <begin position="221"/>
        <end position="285"/>
    </location>
</feature>
<feature type="glycosylation site" description="N-linked (GlcNAc...) asparagine" evidence="1 2">
    <location>
        <position position="24"/>
    </location>
</feature>
<proteinExistence type="evidence at protein level"/>
<name>MRCOL_HUMAN</name>
<reference key="1">
    <citation type="journal article" date="2004" name="Nature">
        <title>The DNA sequence and comparative analysis of human chromosome 5.</title>
        <authorList>
            <person name="Schmutz J."/>
            <person name="Martin J."/>
            <person name="Terry A."/>
            <person name="Couronne O."/>
            <person name="Grimwood J."/>
            <person name="Lowry S."/>
            <person name="Gordon L.A."/>
            <person name="Scott D."/>
            <person name="Xie G."/>
            <person name="Huang W."/>
            <person name="Hellsten U."/>
            <person name="Tran-Gyamfi M."/>
            <person name="She X."/>
            <person name="Prabhakar S."/>
            <person name="Aerts A."/>
            <person name="Altherr M."/>
            <person name="Bajorek E."/>
            <person name="Black S."/>
            <person name="Branscomb E."/>
            <person name="Caoile C."/>
            <person name="Challacombe J.F."/>
            <person name="Chan Y.M."/>
            <person name="Denys M."/>
            <person name="Detter J.C."/>
            <person name="Escobar J."/>
            <person name="Flowers D."/>
            <person name="Fotopulos D."/>
            <person name="Glavina T."/>
            <person name="Gomez M."/>
            <person name="Gonzales E."/>
            <person name="Goodstein D."/>
            <person name="Grigoriev I."/>
            <person name="Groza M."/>
            <person name="Hammon N."/>
            <person name="Hawkins T."/>
            <person name="Haydu L."/>
            <person name="Israni S."/>
            <person name="Jett J."/>
            <person name="Kadner K."/>
            <person name="Kimball H."/>
            <person name="Kobayashi A."/>
            <person name="Lopez F."/>
            <person name="Lou Y."/>
            <person name="Martinez D."/>
            <person name="Medina C."/>
            <person name="Morgan J."/>
            <person name="Nandkeshwar R."/>
            <person name="Noonan J.P."/>
            <person name="Pitluck S."/>
            <person name="Pollard M."/>
            <person name="Predki P."/>
            <person name="Priest J."/>
            <person name="Ramirez L."/>
            <person name="Retterer J."/>
            <person name="Rodriguez A."/>
            <person name="Rogers S."/>
            <person name="Salamov A."/>
            <person name="Salazar A."/>
            <person name="Thayer N."/>
            <person name="Tice H."/>
            <person name="Tsai M."/>
            <person name="Ustaszewska A."/>
            <person name="Vo N."/>
            <person name="Wheeler J."/>
            <person name="Wu K."/>
            <person name="Yang J."/>
            <person name="Dickson M."/>
            <person name="Cheng J.-F."/>
            <person name="Eichler E.E."/>
            <person name="Olsen A."/>
            <person name="Pennacchio L.A."/>
            <person name="Rokhsar D.S."/>
            <person name="Richardson P."/>
            <person name="Lucas S.M."/>
            <person name="Myers R.M."/>
            <person name="Rubin E.M."/>
        </authorList>
    </citation>
    <scope>NUCLEOTIDE SEQUENCE [LARGE SCALE GENOMIC DNA]</scope>
</reference>
<reference key="2">
    <citation type="submission" date="2003-06" db="EMBL/GenBank/DDBJ databases">
        <title>Liver regeneration after PH.</title>
        <authorList>
            <person name="Xu C.S."/>
        </authorList>
    </citation>
    <scope>NUCLEOTIDE SEQUENCE [LARGE SCALE MRNA] OF 1-66</scope>
    <source>
        <tissue>Liver</tissue>
    </source>
</reference>
<protein>
    <recommendedName>
        <fullName evidence="4">MARCO-like protein</fullName>
    </recommendedName>
</protein>
<accession>A0A1B0GUY1</accession>
<evidence type="ECO:0000255" key="1"/>
<evidence type="ECO:0000255" key="2">
    <source>
        <dbReference type="PROSITE-ProRule" id="PRU00498"/>
    </source>
</evidence>
<evidence type="ECO:0000256" key="3">
    <source>
        <dbReference type="SAM" id="MobiDB-lite"/>
    </source>
</evidence>
<evidence type="ECO:0000305" key="4"/>
<evidence type="ECO:0000312" key="5">
    <source>
        <dbReference type="HGNC" id="HGNC:53644"/>
    </source>
</evidence>
<dbReference type="EMBL" id="AC011346">
    <property type="status" value="NOT_ANNOTATED_CDS"/>
    <property type="molecule type" value="Genomic_DNA"/>
</dbReference>
<dbReference type="EMBL" id="DW438845">
    <property type="status" value="NOT_ANNOTATED_CDS"/>
    <property type="molecule type" value="mRNA"/>
</dbReference>
<dbReference type="CCDS" id="CCDS87333.1"/>
<dbReference type="RefSeq" id="NP_001350440.1">
    <property type="nucleotide sequence ID" value="NM_001363511.2"/>
</dbReference>
<dbReference type="RefSeq" id="XP_011536019.1">
    <property type="nucleotide sequence ID" value="XM_011537717.2"/>
</dbReference>
<dbReference type="FunCoup" id="A0A1B0GUY1">
    <property type="interactions" value="1"/>
</dbReference>
<dbReference type="GlyCosmos" id="A0A1B0GUY1">
    <property type="glycosylation" value="1 site, No reported glycans"/>
</dbReference>
<dbReference type="GlyGen" id="A0A1B0GUY1">
    <property type="glycosylation" value="3 sites, 1 O-linked glycan (2 sites)"/>
</dbReference>
<dbReference type="BioMuta" id="ENSG00000248109"/>
<dbReference type="jPOST" id="A0A1B0GUY1"/>
<dbReference type="MassIVE" id="A0A1B0GUY1"/>
<dbReference type="PeptideAtlas" id="A0A1B0GUY1"/>
<dbReference type="Ensembl" id="ENST00000638089.2">
    <property type="protein sequence ID" value="ENSP00000490292.1"/>
    <property type="gene ID" value="ENSG00000248109.3"/>
</dbReference>
<dbReference type="GeneID" id="105378220"/>
<dbReference type="MANE-Select" id="ENST00000638089.2">
    <property type="protein sequence ID" value="ENSP00000490292.1"/>
    <property type="RefSeq nucleotide sequence ID" value="NM_001363511.2"/>
    <property type="RefSeq protein sequence ID" value="NP_001350440.1"/>
</dbReference>
<dbReference type="AGR" id="HGNC:53644"/>
<dbReference type="GeneCards" id="MARCOL"/>
<dbReference type="HGNC" id="HGNC:53644">
    <property type="gene designation" value="MARCOL"/>
</dbReference>
<dbReference type="HPA" id="ENSG00000248109">
    <property type="expression patterns" value="Tissue enhanced (urinary)"/>
</dbReference>
<dbReference type="neXtProt" id="NX_A0A1B0GUY1"/>
<dbReference type="OpenTargets" id="ENSG00000248109"/>
<dbReference type="VEuPathDB" id="HostDB:ENSG00000248109"/>
<dbReference type="GeneTree" id="ENSGT00740000116871"/>
<dbReference type="InParanoid" id="A0A1B0GUY1"/>
<dbReference type="OMA" id="FHQQGRP"/>
<dbReference type="OrthoDB" id="126772at2759"/>
<dbReference type="PAN-GO" id="A0A1B0GUY1">
    <property type="GO annotations" value="4 GO annotations based on evolutionary models"/>
</dbReference>
<dbReference type="Pharos" id="A0A1B0GUY1">
    <property type="development level" value="Tdark"/>
</dbReference>
<dbReference type="PRO" id="PR:A0A1B0GUY1"/>
<dbReference type="Proteomes" id="UP000005640">
    <property type="component" value="Chromosome 5"/>
</dbReference>
<dbReference type="RNAct" id="A0A1B0GUY1">
    <property type="molecule type" value="protein"/>
</dbReference>
<dbReference type="Bgee" id="ENSG00000248109">
    <property type="expression patterns" value="Expressed in primordial germ cell in gonad and 20 other cell types or tissues"/>
</dbReference>
<dbReference type="ExpressionAtlas" id="A0A1B0GUY1">
    <property type="expression patterns" value="baseline and differential"/>
</dbReference>
<dbReference type="GO" id="GO:0005788">
    <property type="term" value="C:endoplasmic reticulum lumen"/>
    <property type="evidence" value="ECO:0007669"/>
    <property type="project" value="UniProtKB-ARBA"/>
</dbReference>
<dbReference type="InterPro" id="IPR050938">
    <property type="entry name" value="Collagen_Structural_Proteins"/>
</dbReference>
<dbReference type="PANTHER" id="PTHR37456:SF6">
    <property type="entry name" value="COLLAGEN ALPHA-1(XXIII) CHAIN-LIKE ISOFORM X2"/>
    <property type="match status" value="1"/>
</dbReference>
<dbReference type="PANTHER" id="PTHR37456">
    <property type="entry name" value="SI:CH211-266K2.1"/>
    <property type="match status" value="1"/>
</dbReference>
<gene>
    <name evidence="5" type="primary">MARCOL</name>
</gene>
<sequence>MRAFIFFLFMLLAMFSASSTQISNTSVFKLEENPKPALILEEKNEANHLGGQRDSNKQGGSYTQGNPGTFRLQGQPGYFNKLEKPRHFKQGRAGVLNQPGILKNSGKSNQKGNPESSNKQENSGSSSQLGRPGISTQQGNPGSSDQQEKPGSFSQKVMVGSSSQQGKPGSSSQHGNLGSSTQKGNLGSSSLQGHLGLSSHQGKPESSGQQGKPGSSSQQGNLGTSGQQEKPGSSSQQGKPGLSSHQGKPGSSSQQGNLHLSSQQGNQGPSSKQRKPGSSSRQGNL</sequence>